<sequence length="933" mass="102258">MPRHHAGGEEGGAAGLWVRSGAAAAAGAGGGRPGSGMKDVESGRGRVLLNSAAARGDGLLLLGTRAAALGGGGGGLRESRRGKQGARMSLLGKPLSYTSSQSCRRNVKYRRVQNYLYNVLERPRGWAFVYHAFVFLLVFGCLILSVFSTIPEHTKLASSCLLILEFVMIVVFGLEFIIRIWSAGCCCRYRGWQGRLRFARKPFCVIDTIVLIASIAVVSAKTQGNIFATSALRSLRFLQILRMVRMDRRGGTWKLLGSVVYAHSKELITAWYIGFLVLIFSSFLVYLVEKDANKEFSTYADALWWGTITLTTIGYGDKTPLTWLGRLLSAGFALLGISFFALPAGILGSGFALKVQEQHRQKHFEKRRNPAANLIQCVWRSYAADEKSVSIATWKPHLKALHTCSPTKKEQGEASSSQKLSFKERVRMASPRGQSIKSRQASVGDRRSPSTDITAEGSPTKVQKSWSFNDRTRFRPSLRLKSSQPKPVIDADTALGIDDVYDEKGCQCDVSVEDLTPPLKTVIRAIRIMKFHVAKRKFKETLRPYDVKDVIEQYSAGHLDMLCRIKSLQTRVDQILGKGQMTSDKKSREKITAEHETTDDPSMLARVVKVEKQVQSIESKLDCLLDIYQQVLRKGSASALTLASFQIPPFECEQTSDYQSPVDSKDLSGSAQNSGCLTRSASANISRGLQFILTPNEFSAQTFYALSPTMHSQATQVPMSQNDGSSVVATNNIANQISAAPKPAAPTTLQIPPPLSAIKHLSRPEPLLSNPTGLQESISDVTTCLVASKESVQFAQSNLTKDRSLRKSFDMGGETLLSVRPMVPKDLGKSLSVQNLIRSTEELNLQFSGSESSGSRGSQDFYPKWRESKLFITDEEVGAEETETDTFDGTPPPAGEAAFSSDSLRTGRSRSSQNICKTGDSTDALSLPHVKLN</sequence>
<comment type="function">
    <text evidence="4 7">Pore-forming subunit of the voltage-gated potassium (Kv) channel broadly expressed in brain and skeletal muscle and involved in the regulation of neuronal excitability (PubMed:15963599). Associates with KCNQ3/Kv7.3 pore-forming subunit to form a potassium channel which contributes to M-type current, a slowly activating and deactivating potassium conductance which plays a critical role in determining the subthreshold electrical excitability of neurons (By similarity). Contributes, with other potassium channels, to the molecular diversity of a heterogeneous population of M-channels, varying in kinetic and pharmacological properties, which underlie this physiologically important current (PubMed:15963599). Also forms a functional channel with KCNQ1/Kv7.1 subunit that may contribute to vasoconstriction and hypertension. Channel may be selectively permeable in vitro to other cations besides potassium, in decreasing order of affinity K(+) = Rb(+) &gt; Cs(+) &gt; Na(+) (By similarity).</text>
</comment>
<comment type="catalytic activity">
    <reaction evidence="4">
        <text>K(+)(in) = K(+)(out)</text>
        <dbReference type="Rhea" id="RHEA:29463"/>
        <dbReference type="ChEBI" id="CHEBI:29103"/>
    </reaction>
</comment>
<comment type="activity regulation">
    <text evidence="3 4 7">Phosphatidylinositol-4,5-bisphosphate (PIP2) is essential to activate KCNQ5 channel by inducing the coupling of the voltage-sensing domain (VSD) and the pore-forming domain (PD) (By similarity). Calcium suppresses KCNQ5 channel current through calcium-bound CALM C-terminus (By similarity). Therefore CALM acts as calcium sensor that controls channel activity (By similarity). Zinc potentiates channel activity in a pH-dependent manner (PubMed:15963599). The activity is modulated by small changes in cell volume (PubMed:15963599). Activated by the anticonvulsant retigabine (PubMed:15963599). Inhibited by linopirdine and XE991 (PubMed:15963599).</text>
</comment>
<comment type="biophysicochemical properties">
    <phDependence>
        <text evidence="7">Optimum pH is 8.2. Channel activity is inhibited by acidification.</text>
    </phDependence>
</comment>
<comment type="subunit">
    <text evidence="4">Homotetramer; forms a functional homotetrameric channel resulting in the expression of a small M-current. Heterotetramer with KCNQ3; forms heterotetrameric M-channel responsible for the native M-current. Heterotetramer with KCNQ1; forms a functional voltage-gated potassium channel. Interacts (via C-terminus) with calmodulin/CALM; forms a heterooctameric structure (with 4:4 KCNQ1:CALM stoichiometry); the interaction is calcium-independent, constitutive and participates in the channel function.</text>
</comment>
<comment type="subcellular location">
    <subcellularLocation>
        <location evidence="7">Cell membrane</location>
        <topology evidence="5">Multi-pass membrane protein</topology>
    </subcellularLocation>
</comment>
<comment type="tissue specificity">
    <text evidence="7">Strongly expressed in brain (PubMed:15963599). Also expressed in colon, lung and uterus (PubMed:15963599).</text>
</comment>
<comment type="domain">
    <text evidence="3">Each channel subunit contains six transmembrane segments (S1-S6) with S1-S4 forming one voltage sensing domain (VSD) and S5-S6 contributing to form one quarter of an interlocking pore-forming domain (PD).</text>
</comment>
<comment type="domain">
    <text evidence="4">The CALM binding domains correspond to the first two membrane-proximal helical regions that interact with a single calmodulin/CALM molecule forming a clamp-like structure and are essential for channel trafficking and electrophysiological activity. CALM N-terminus binds to the second helix in both calcium-free and calcium-bound forms and regulates channel trafficking. CALM C-terminus binds to the first helice in calcium-free form; this interaction is disrupted by calcium binding which regulates channel electrophysiological activity.</text>
</comment>
<comment type="domain">
    <text evidence="2">The C-terminal assembly domain carries the major determinants of tetramerization and subunit assembly specificity. Its coiled-coil region is four-stranded.</text>
</comment>
<comment type="similarity">
    <text evidence="8">Belongs to the potassium channel family. KQT (TC 1.A.1.15) subfamily. Kv7.5/KCNQ5 sub-subfamily.</text>
</comment>
<organism>
    <name type="scientific">Mus musculus</name>
    <name type="common">Mouse</name>
    <dbReference type="NCBI Taxonomy" id="10090"/>
    <lineage>
        <taxon>Eukaryota</taxon>
        <taxon>Metazoa</taxon>
        <taxon>Chordata</taxon>
        <taxon>Craniata</taxon>
        <taxon>Vertebrata</taxon>
        <taxon>Euteleostomi</taxon>
        <taxon>Mammalia</taxon>
        <taxon>Eutheria</taxon>
        <taxon>Euarchontoglires</taxon>
        <taxon>Glires</taxon>
        <taxon>Rodentia</taxon>
        <taxon>Myomorpha</taxon>
        <taxon>Muroidea</taxon>
        <taxon>Muridae</taxon>
        <taxon>Murinae</taxon>
        <taxon>Mus</taxon>
        <taxon>Mus</taxon>
    </lineage>
</organism>
<protein>
    <recommendedName>
        <fullName>Potassium voltage-gated channel subfamily KQT member 5</fullName>
    </recommendedName>
    <alternativeName>
        <fullName>KQT-like 5</fullName>
    </alternativeName>
    <alternativeName>
        <fullName>Potassium channel subunit alpha KvLQT5</fullName>
    </alternativeName>
    <alternativeName>
        <fullName>Voltage-gated potassium channel subunit Kv7.5</fullName>
    </alternativeName>
</protein>
<feature type="chain" id="PRO_0000054041" description="Potassium voltage-gated channel subfamily KQT member 5">
    <location>
        <begin position="1"/>
        <end position="933"/>
    </location>
</feature>
<feature type="topological domain" description="Cytoplasmic" evidence="5">
    <location>
        <begin position="1"/>
        <end position="126"/>
    </location>
</feature>
<feature type="transmembrane region" description="Helical; Name=Segment S1" evidence="5">
    <location>
        <begin position="127"/>
        <end position="147"/>
    </location>
</feature>
<feature type="topological domain" description="Extracellular" evidence="5">
    <location>
        <begin position="148"/>
        <end position="157"/>
    </location>
</feature>
<feature type="transmembrane region" description="Helical; Name=Segment S2" evidence="5">
    <location>
        <begin position="158"/>
        <end position="178"/>
    </location>
</feature>
<feature type="topological domain" description="Cytoplasmic" evidence="5">
    <location>
        <begin position="179"/>
        <end position="201"/>
    </location>
</feature>
<feature type="transmembrane region" description="Helical; Name=Segment S3" evidence="5">
    <location>
        <begin position="202"/>
        <end position="222"/>
    </location>
</feature>
<feature type="topological domain" description="Extracellular" evidence="5">
    <location>
        <begin position="223"/>
        <end position="230"/>
    </location>
</feature>
<feature type="transmembrane region" description="Helical; Voltage-sensor; Name=Segment S4" evidence="5">
    <location>
        <begin position="231"/>
        <end position="253"/>
    </location>
</feature>
<feature type="topological domain" description="Cytoplasmic" evidence="5">
    <location>
        <begin position="254"/>
        <end position="267"/>
    </location>
</feature>
<feature type="transmembrane region" description="Helical; Name=Segment S5" evidence="5">
    <location>
        <begin position="268"/>
        <end position="288"/>
    </location>
</feature>
<feature type="topological domain" description="Extracellular" evidence="5">
    <location>
        <begin position="289"/>
        <end position="299"/>
    </location>
</feature>
<feature type="intramembrane region" description="Pore-forming; Name=Segment H5" evidence="5">
    <location>
        <begin position="300"/>
        <end position="320"/>
    </location>
</feature>
<feature type="topological domain" description="Extracellular" evidence="5">
    <location>
        <begin position="321"/>
        <end position="326"/>
    </location>
</feature>
<feature type="transmembrane region" description="Helical; Name=Segment S6" evidence="5">
    <location>
        <begin position="327"/>
        <end position="347"/>
    </location>
</feature>
<feature type="topological domain" description="Cytoplasmic" evidence="5">
    <location>
        <begin position="348"/>
        <end position="933"/>
    </location>
</feature>
<feature type="region of interest" description="Interaction with CALM" evidence="4">
    <location>
        <begin position="371"/>
        <end position="379"/>
    </location>
</feature>
<feature type="region of interest" description="Disordered" evidence="6">
    <location>
        <begin position="405"/>
        <end position="465"/>
    </location>
</feature>
<feature type="region of interest" description="Interaction with CALM" evidence="4">
    <location>
        <begin position="522"/>
        <end position="529"/>
    </location>
</feature>
<feature type="region of interest" description="Disordered" evidence="6">
    <location>
        <begin position="578"/>
        <end position="598"/>
    </location>
</feature>
<feature type="region of interest" description="Disordered" evidence="6">
    <location>
        <begin position="878"/>
        <end position="933"/>
    </location>
</feature>
<feature type="compositionally biased region" description="Polar residues" evidence="6">
    <location>
        <begin position="432"/>
        <end position="441"/>
    </location>
</feature>
<feature type="compositionally biased region" description="Basic and acidic residues" evidence="6">
    <location>
        <begin position="583"/>
        <end position="598"/>
    </location>
</feature>
<feature type="compositionally biased region" description="Polar residues" evidence="6">
    <location>
        <begin position="900"/>
        <end position="924"/>
    </location>
</feature>
<feature type="binding site" evidence="1">
    <location>
        <position position="249"/>
    </location>
    <ligand>
        <name>a 1,2-diacyl-sn-glycero-3-phospho-(1D-myo-inositol-4,5-bisphosphate)</name>
        <dbReference type="ChEBI" id="CHEBI:58456"/>
    </ligand>
</feature>
<feature type="binding site" evidence="1">
    <location>
        <position position="265"/>
    </location>
    <ligand>
        <name>a 1,2-diacyl-sn-glycero-3-phospho-(1D-myo-inositol-4,5-bisphosphate)</name>
        <dbReference type="ChEBI" id="CHEBI:58456"/>
    </ligand>
</feature>
<feature type="binding site" evidence="1">
    <location>
        <position position="362"/>
    </location>
    <ligand>
        <name>a 1,2-diacyl-sn-glycero-3-phospho-(1D-myo-inositol-4,5-bisphosphate)</name>
        <dbReference type="ChEBI" id="CHEBI:58456"/>
    </ligand>
</feature>
<feature type="modified residue" description="Phosphoserine" evidence="10">
    <location>
        <position position="89"/>
    </location>
</feature>
<feature type="modified residue" description="Phosphoserine" evidence="10">
    <location>
        <position position="448"/>
    </location>
</feature>
<feature type="modified residue" description="Phosphoserine" evidence="10">
    <location>
        <position position="832"/>
    </location>
</feature>
<feature type="sequence conflict" description="In Ref. 3; BAC28145." evidence="8" ref="3">
    <original>S</original>
    <variation>Y</variation>
    <location>
        <position position="636"/>
    </location>
</feature>
<feature type="sequence conflict" description="In Ref. 3; BAC28145." evidence="8" ref="3">
    <original>D</original>
    <variation>G</variation>
    <location>
        <position position="923"/>
    </location>
</feature>
<reference key="1">
    <citation type="journal article" date="2005" name="Brain Res. Mol. Brain Res.">
        <title>The KCNQ5 potassium channel from mouse: a broadly expressed M-current like potassium channel modulated by zinc, pH, and volume changes.</title>
        <authorList>
            <person name="Jensen H.S."/>
            <person name="Callo K."/>
            <person name="Jespersen T."/>
            <person name="Jensen B.S."/>
            <person name="Olesen S.-P."/>
        </authorList>
    </citation>
    <scope>NUCLEOTIDE SEQUENCE [MRNA]</scope>
    <scope>FUNCTION</scope>
    <scope>SUBCELLULAR LOCATION</scope>
    <scope>ACTIVITY REGULATION</scope>
    <scope>BIOPHYSICOCHEMICAL PROPERTIES</scope>
    <source>
        <tissue>Brain</tissue>
    </source>
</reference>
<reference key="2">
    <citation type="submission" date="2000-05" db="EMBL/GenBank/DDBJ databases">
        <title>A new gene of the voltage-gated potassium channel KCNQ family, KCNQ5, is a candidate gene for retinal disorders.</title>
        <authorList>
            <person name="Kniazeva M."/>
            <person name="Han M."/>
        </authorList>
    </citation>
    <scope>NUCLEOTIDE SEQUENCE [MRNA] OF 56-933</scope>
    <source>
        <strain>BALB/cJ</strain>
        <tissue>Brain</tissue>
    </source>
</reference>
<reference key="3">
    <citation type="journal article" date="2005" name="Science">
        <title>The transcriptional landscape of the mammalian genome.</title>
        <authorList>
            <person name="Carninci P."/>
            <person name="Kasukawa T."/>
            <person name="Katayama S."/>
            <person name="Gough J."/>
            <person name="Frith M.C."/>
            <person name="Maeda N."/>
            <person name="Oyama R."/>
            <person name="Ravasi T."/>
            <person name="Lenhard B."/>
            <person name="Wells C."/>
            <person name="Kodzius R."/>
            <person name="Shimokawa K."/>
            <person name="Bajic V.B."/>
            <person name="Brenner S.E."/>
            <person name="Batalov S."/>
            <person name="Forrest A.R."/>
            <person name="Zavolan M."/>
            <person name="Davis M.J."/>
            <person name="Wilming L.G."/>
            <person name="Aidinis V."/>
            <person name="Allen J.E."/>
            <person name="Ambesi-Impiombato A."/>
            <person name="Apweiler R."/>
            <person name="Aturaliya R.N."/>
            <person name="Bailey T.L."/>
            <person name="Bansal M."/>
            <person name="Baxter L."/>
            <person name="Beisel K.W."/>
            <person name="Bersano T."/>
            <person name="Bono H."/>
            <person name="Chalk A.M."/>
            <person name="Chiu K.P."/>
            <person name="Choudhary V."/>
            <person name="Christoffels A."/>
            <person name="Clutterbuck D.R."/>
            <person name="Crowe M.L."/>
            <person name="Dalla E."/>
            <person name="Dalrymple B.P."/>
            <person name="de Bono B."/>
            <person name="Della Gatta G."/>
            <person name="di Bernardo D."/>
            <person name="Down T."/>
            <person name="Engstrom P."/>
            <person name="Fagiolini M."/>
            <person name="Faulkner G."/>
            <person name="Fletcher C.F."/>
            <person name="Fukushima T."/>
            <person name="Furuno M."/>
            <person name="Futaki S."/>
            <person name="Gariboldi M."/>
            <person name="Georgii-Hemming P."/>
            <person name="Gingeras T.R."/>
            <person name="Gojobori T."/>
            <person name="Green R.E."/>
            <person name="Gustincich S."/>
            <person name="Harbers M."/>
            <person name="Hayashi Y."/>
            <person name="Hensch T.K."/>
            <person name="Hirokawa N."/>
            <person name="Hill D."/>
            <person name="Huminiecki L."/>
            <person name="Iacono M."/>
            <person name="Ikeo K."/>
            <person name="Iwama A."/>
            <person name="Ishikawa T."/>
            <person name="Jakt M."/>
            <person name="Kanapin A."/>
            <person name="Katoh M."/>
            <person name="Kawasawa Y."/>
            <person name="Kelso J."/>
            <person name="Kitamura H."/>
            <person name="Kitano H."/>
            <person name="Kollias G."/>
            <person name="Krishnan S.P."/>
            <person name="Kruger A."/>
            <person name="Kummerfeld S.K."/>
            <person name="Kurochkin I.V."/>
            <person name="Lareau L.F."/>
            <person name="Lazarevic D."/>
            <person name="Lipovich L."/>
            <person name="Liu J."/>
            <person name="Liuni S."/>
            <person name="McWilliam S."/>
            <person name="Madan Babu M."/>
            <person name="Madera M."/>
            <person name="Marchionni L."/>
            <person name="Matsuda H."/>
            <person name="Matsuzawa S."/>
            <person name="Miki H."/>
            <person name="Mignone F."/>
            <person name="Miyake S."/>
            <person name="Morris K."/>
            <person name="Mottagui-Tabar S."/>
            <person name="Mulder N."/>
            <person name="Nakano N."/>
            <person name="Nakauchi H."/>
            <person name="Ng P."/>
            <person name="Nilsson R."/>
            <person name="Nishiguchi S."/>
            <person name="Nishikawa S."/>
            <person name="Nori F."/>
            <person name="Ohara O."/>
            <person name="Okazaki Y."/>
            <person name="Orlando V."/>
            <person name="Pang K.C."/>
            <person name="Pavan W.J."/>
            <person name="Pavesi G."/>
            <person name="Pesole G."/>
            <person name="Petrovsky N."/>
            <person name="Piazza S."/>
            <person name="Reed J."/>
            <person name="Reid J.F."/>
            <person name="Ring B.Z."/>
            <person name="Ringwald M."/>
            <person name="Rost B."/>
            <person name="Ruan Y."/>
            <person name="Salzberg S.L."/>
            <person name="Sandelin A."/>
            <person name="Schneider C."/>
            <person name="Schoenbach C."/>
            <person name="Sekiguchi K."/>
            <person name="Semple C.A."/>
            <person name="Seno S."/>
            <person name="Sessa L."/>
            <person name="Sheng Y."/>
            <person name="Shibata Y."/>
            <person name="Shimada H."/>
            <person name="Shimada K."/>
            <person name="Silva D."/>
            <person name="Sinclair B."/>
            <person name="Sperling S."/>
            <person name="Stupka E."/>
            <person name="Sugiura K."/>
            <person name="Sultana R."/>
            <person name="Takenaka Y."/>
            <person name="Taki K."/>
            <person name="Tammoja K."/>
            <person name="Tan S.L."/>
            <person name="Tang S."/>
            <person name="Taylor M.S."/>
            <person name="Tegner J."/>
            <person name="Teichmann S.A."/>
            <person name="Ueda H.R."/>
            <person name="van Nimwegen E."/>
            <person name="Verardo R."/>
            <person name="Wei C.L."/>
            <person name="Yagi K."/>
            <person name="Yamanishi H."/>
            <person name="Zabarovsky E."/>
            <person name="Zhu S."/>
            <person name="Zimmer A."/>
            <person name="Hide W."/>
            <person name="Bult C."/>
            <person name="Grimmond S.M."/>
            <person name="Teasdale R.D."/>
            <person name="Liu E.T."/>
            <person name="Brusic V."/>
            <person name="Quackenbush J."/>
            <person name="Wahlestedt C."/>
            <person name="Mattick J.S."/>
            <person name="Hume D.A."/>
            <person name="Kai C."/>
            <person name="Sasaki D."/>
            <person name="Tomaru Y."/>
            <person name="Fukuda S."/>
            <person name="Kanamori-Katayama M."/>
            <person name="Suzuki M."/>
            <person name="Aoki J."/>
            <person name="Arakawa T."/>
            <person name="Iida J."/>
            <person name="Imamura K."/>
            <person name="Itoh M."/>
            <person name="Kato T."/>
            <person name="Kawaji H."/>
            <person name="Kawagashira N."/>
            <person name="Kawashima T."/>
            <person name="Kojima M."/>
            <person name="Kondo S."/>
            <person name="Konno H."/>
            <person name="Nakano K."/>
            <person name="Ninomiya N."/>
            <person name="Nishio T."/>
            <person name="Okada M."/>
            <person name="Plessy C."/>
            <person name="Shibata K."/>
            <person name="Shiraki T."/>
            <person name="Suzuki S."/>
            <person name="Tagami M."/>
            <person name="Waki K."/>
            <person name="Watahiki A."/>
            <person name="Okamura-Oho Y."/>
            <person name="Suzuki H."/>
            <person name="Kawai J."/>
            <person name="Hayashizaki Y."/>
        </authorList>
    </citation>
    <scope>NUCLEOTIDE SEQUENCE [LARGE SCALE MRNA] OF 362-933</scope>
    <source>
        <strain>C57BL/6J</strain>
        <tissue>Brain cortex</tissue>
    </source>
</reference>
<reference key="4">
    <citation type="journal article" date="2010" name="Cell">
        <title>A tissue-specific atlas of mouse protein phosphorylation and expression.</title>
        <authorList>
            <person name="Huttlin E.L."/>
            <person name="Jedrychowski M.P."/>
            <person name="Elias J.E."/>
            <person name="Goswami T."/>
            <person name="Rad R."/>
            <person name="Beausoleil S.A."/>
            <person name="Villen J."/>
            <person name="Haas W."/>
            <person name="Sowa M.E."/>
            <person name="Gygi S.P."/>
        </authorList>
    </citation>
    <scope>PHOSPHORYLATION [LARGE SCALE ANALYSIS] AT SER-89; SER-448 AND SER-832</scope>
    <scope>IDENTIFICATION BY MASS SPECTROMETRY [LARGE SCALE ANALYSIS]</scope>
    <source>
        <tissue>Brain</tissue>
        <tissue>Lung</tissue>
    </source>
</reference>
<name>KCNQ5_MOUSE</name>
<dbReference type="EMBL" id="AY679158">
    <property type="protein sequence ID" value="AAT76442.1"/>
    <property type="molecule type" value="mRNA"/>
</dbReference>
<dbReference type="EMBL" id="AF263836">
    <property type="protein sequence ID" value="AAF73447.1"/>
    <property type="molecule type" value="mRNA"/>
</dbReference>
<dbReference type="EMBL" id="AK033079">
    <property type="protein sequence ID" value="BAC28145.1"/>
    <property type="molecule type" value="mRNA"/>
</dbReference>
<dbReference type="CCDS" id="CCDS35525.1"/>
<dbReference type="RefSeq" id="NP_076361.1">
    <property type="nucleotide sequence ID" value="NM_023872.3"/>
</dbReference>
<dbReference type="SMR" id="Q9JK45"/>
<dbReference type="BioGRID" id="230570">
    <property type="interactions" value="2"/>
</dbReference>
<dbReference type="FunCoup" id="Q9JK45">
    <property type="interactions" value="101"/>
</dbReference>
<dbReference type="IntAct" id="Q9JK45">
    <property type="interactions" value="1"/>
</dbReference>
<dbReference type="MINT" id="Q9JK45"/>
<dbReference type="STRING" id="10090.ENSMUSP00000110955"/>
<dbReference type="TCDB" id="1.A.1.15.5">
    <property type="family name" value="the voltage-gated ion channel (vic) superfamily"/>
</dbReference>
<dbReference type="iPTMnet" id="Q9JK45"/>
<dbReference type="PhosphoSitePlus" id="Q9JK45"/>
<dbReference type="PaxDb" id="10090-ENSMUSP00000110955"/>
<dbReference type="ProteomicsDB" id="269206"/>
<dbReference type="Antibodypedia" id="17775">
    <property type="antibodies" value="244 antibodies from 31 providers"/>
</dbReference>
<dbReference type="DNASU" id="226922"/>
<dbReference type="Ensembl" id="ENSMUST00000029667.13">
    <property type="protein sequence ID" value="ENSMUSP00000029667.7"/>
    <property type="gene ID" value="ENSMUSG00000028033.17"/>
</dbReference>
<dbReference type="GeneID" id="226922"/>
<dbReference type="KEGG" id="mmu:226922"/>
<dbReference type="UCSC" id="uc007alq.2">
    <property type="organism name" value="mouse"/>
</dbReference>
<dbReference type="AGR" id="MGI:1924937"/>
<dbReference type="CTD" id="56479"/>
<dbReference type="MGI" id="MGI:1924937">
    <property type="gene designation" value="Kcnq5"/>
</dbReference>
<dbReference type="VEuPathDB" id="HostDB:ENSMUSG00000028033"/>
<dbReference type="eggNOG" id="KOG1419">
    <property type="taxonomic scope" value="Eukaryota"/>
</dbReference>
<dbReference type="GeneTree" id="ENSGT00940000155933"/>
<dbReference type="InParanoid" id="Q9JK45"/>
<dbReference type="OrthoDB" id="8879391at2759"/>
<dbReference type="PhylomeDB" id="Q9JK45"/>
<dbReference type="Reactome" id="R-MMU-1296072">
    <property type="pathway name" value="Voltage gated Potassium channels"/>
</dbReference>
<dbReference type="BioGRID-ORCS" id="226922">
    <property type="hits" value="5 hits in 79 CRISPR screens"/>
</dbReference>
<dbReference type="ChiTaRS" id="Kcnq5">
    <property type="organism name" value="mouse"/>
</dbReference>
<dbReference type="PRO" id="PR:Q9JK45"/>
<dbReference type="Proteomes" id="UP000000589">
    <property type="component" value="Chromosome 1"/>
</dbReference>
<dbReference type="RNAct" id="Q9JK45">
    <property type="molecule type" value="protein"/>
</dbReference>
<dbReference type="Bgee" id="ENSMUSG00000028033">
    <property type="expression patterns" value="Expressed in caudate-putamen and 159 other cell types or tissues"/>
</dbReference>
<dbReference type="ExpressionAtlas" id="Q9JK45">
    <property type="expression patterns" value="baseline and differential"/>
</dbReference>
<dbReference type="GO" id="GO:0030118">
    <property type="term" value="C:clathrin coat"/>
    <property type="evidence" value="ECO:0000250"/>
    <property type="project" value="UniProtKB"/>
</dbReference>
<dbReference type="GO" id="GO:0005886">
    <property type="term" value="C:plasma membrane"/>
    <property type="evidence" value="ECO:0000250"/>
    <property type="project" value="UniProtKB"/>
</dbReference>
<dbReference type="GO" id="GO:0008076">
    <property type="term" value="C:voltage-gated potassium channel complex"/>
    <property type="evidence" value="ECO:0000250"/>
    <property type="project" value="UniProtKB"/>
</dbReference>
<dbReference type="GO" id="GO:0005249">
    <property type="term" value="F:voltage-gated potassium channel activity"/>
    <property type="evidence" value="ECO:0000314"/>
    <property type="project" value="MGI"/>
</dbReference>
<dbReference type="GO" id="GO:0006813">
    <property type="term" value="P:potassium ion transport"/>
    <property type="evidence" value="ECO:0000314"/>
    <property type="project" value="MGI"/>
</dbReference>
<dbReference type="FunFam" id="1.10.287.70:FF:000016">
    <property type="entry name" value="Putative potassium voltage-gated channel subfamily KQT member 2"/>
    <property type="match status" value="1"/>
</dbReference>
<dbReference type="Gene3D" id="1.10.287.70">
    <property type="match status" value="1"/>
</dbReference>
<dbReference type="Gene3D" id="6.10.140.1910">
    <property type="match status" value="2"/>
</dbReference>
<dbReference type="InterPro" id="IPR005821">
    <property type="entry name" value="Ion_trans_dom"/>
</dbReference>
<dbReference type="InterPro" id="IPR003937">
    <property type="entry name" value="K_chnl_volt-dep_KCNQ"/>
</dbReference>
<dbReference type="InterPro" id="IPR013821">
    <property type="entry name" value="K_chnl_volt-dep_KCNQ_C"/>
</dbReference>
<dbReference type="PANTHER" id="PTHR47735">
    <property type="entry name" value="POTASSIUM VOLTAGE-GATED CHANNEL SUBFAMILY KQT MEMBER 4"/>
    <property type="match status" value="1"/>
</dbReference>
<dbReference type="PANTHER" id="PTHR47735:SF8">
    <property type="entry name" value="POTASSIUM VOLTAGE-GATED CHANNEL SUBFAMILY KQT MEMBER 5"/>
    <property type="match status" value="1"/>
</dbReference>
<dbReference type="Pfam" id="PF00520">
    <property type="entry name" value="Ion_trans"/>
    <property type="match status" value="1"/>
</dbReference>
<dbReference type="Pfam" id="PF03520">
    <property type="entry name" value="KCNQ_channel"/>
    <property type="match status" value="1"/>
</dbReference>
<dbReference type="PRINTS" id="PR00169">
    <property type="entry name" value="KCHANNEL"/>
</dbReference>
<dbReference type="PRINTS" id="PR01459">
    <property type="entry name" value="KCNQCHANNEL"/>
</dbReference>
<dbReference type="SUPFAM" id="SSF81324">
    <property type="entry name" value="Voltage-gated potassium channels"/>
    <property type="match status" value="1"/>
</dbReference>
<keyword id="KW-1003">Cell membrane</keyword>
<keyword id="KW-0407">Ion channel</keyword>
<keyword id="KW-0406">Ion transport</keyword>
<keyword id="KW-0472">Membrane</keyword>
<keyword id="KW-0597">Phosphoprotein</keyword>
<keyword id="KW-0630">Potassium</keyword>
<keyword id="KW-0631">Potassium channel</keyword>
<keyword id="KW-0633">Potassium transport</keyword>
<keyword id="KW-1185">Reference proteome</keyword>
<keyword id="KW-0812">Transmembrane</keyword>
<keyword id="KW-1133">Transmembrane helix</keyword>
<keyword id="KW-0813">Transport</keyword>
<keyword id="KW-0851">Voltage-gated channel</keyword>
<evidence type="ECO:0000250" key="1">
    <source>
        <dbReference type="UniProtKB" id="O43526"/>
    </source>
</evidence>
<evidence type="ECO:0000250" key="2">
    <source>
        <dbReference type="UniProtKB" id="P56696"/>
    </source>
</evidence>
<evidence type="ECO:0000250" key="3">
    <source>
        <dbReference type="UniProtKB" id="Q92508"/>
    </source>
</evidence>
<evidence type="ECO:0000250" key="4">
    <source>
        <dbReference type="UniProtKB" id="Q9NR82"/>
    </source>
</evidence>
<evidence type="ECO:0000255" key="5"/>
<evidence type="ECO:0000256" key="6">
    <source>
        <dbReference type="SAM" id="MobiDB-lite"/>
    </source>
</evidence>
<evidence type="ECO:0000269" key="7">
    <source>
    </source>
</evidence>
<evidence type="ECO:0000305" key="8"/>
<evidence type="ECO:0000312" key="9">
    <source>
        <dbReference type="MGI" id="MGI:1924937"/>
    </source>
</evidence>
<evidence type="ECO:0007744" key="10">
    <source>
    </source>
</evidence>
<proteinExistence type="evidence at protein level"/>
<accession>Q9JK45</accession>
<accession>Q4QXS5</accession>
<accession>Q8BSF6</accession>
<gene>
    <name evidence="9" type="primary">Kcnq5</name>
</gene>